<comment type="function">
    <text evidence="1">PPIases accelerate the folding of proteins. It catalyzes the cis-trans isomerization of proline imidic peptide bonds in oligopeptides (By similarity).</text>
</comment>
<comment type="catalytic activity">
    <reaction>
        <text>[protein]-peptidylproline (omega=180) = [protein]-peptidylproline (omega=0)</text>
        <dbReference type="Rhea" id="RHEA:16237"/>
        <dbReference type="Rhea" id="RHEA-COMP:10747"/>
        <dbReference type="Rhea" id="RHEA-COMP:10748"/>
        <dbReference type="ChEBI" id="CHEBI:83833"/>
        <dbReference type="ChEBI" id="CHEBI:83834"/>
        <dbReference type="EC" id="5.2.1.8"/>
    </reaction>
</comment>
<comment type="subcellular location">
    <subcellularLocation>
        <location evidence="5">Plastid</location>
        <location evidence="5">Chloroplast thylakoid lumen</location>
    </subcellularLocation>
</comment>
<comment type="similarity">
    <text evidence="6">Belongs to the FKBP-type PPIase family.</text>
</comment>
<dbReference type="EC" id="5.2.1.8"/>
<dbReference type="EMBL" id="AC034107">
    <property type="protein sequence ID" value="AAF97833.1"/>
    <property type="molecule type" value="Genomic_DNA"/>
</dbReference>
<dbReference type="EMBL" id="AC069551">
    <property type="protein sequence ID" value="AAF78374.1"/>
    <property type="molecule type" value="Genomic_DNA"/>
</dbReference>
<dbReference type="EMBL" id="CP002684">
    <property type="protein sequence ID" value="AEE29683.1"/>
    <property type="molecule type" value="Genomic_DNA"/>
</dbReference>
<dbReference type="EMBL" id="AF334381">
    <property type="protein sequence ID" value="AAG50087.1"/>
    <property type="molecule type" value="mRNA"/>
</dbReference>
<dbReference type="EMBL" id="AY088153">
    <property type="protein sequence ID" value="AAM65697.1"/>
    <property type="molecule type" value="mRNA"/>
</dbReference>
<dbReference type="RefSeq" id="NP_564048.1">
    <property type="nucleotide sequence ID" value="NM_101677.2"/>
</dbReference>
<dbReference type="SMR" id="Q9LDY5"/>
<dbReference type="FunCoup" id="Q9LDY5">
    <property type="interactions" value="1077"/>
</dbReference>
<dbReference type="STRING" id="3702.Q9LDY5"/>
<dbReference type="iPTMnet" id="Q9LDY5"/>
<dbReference type="PaxDb" id="3702-AT1G18170.1"/>
<dbReference type="ProteomicsDB" id="230779"/>
<dbReference type="EnsemblPlants" id="AT1G18170.1">
    <property type="protein sequence ID" value="AT1G18170.1"/>
    <property type="gene ID" value="AT1G18170"/>
</dbReference>
<dbReference type="GeneID" id="838396"/>
<dbReference type="Gramene" id="AT1G18170.1">
    <property type="protein sequence ID" value="AT1G18170.1"/>
    <property type="gene ID" value="AT1G18170"/>
</dbReference>
<dbReference type="KEGG" id="ath:AT1G18170"/>
<dbReference type="Araport" id="AT1G18170"/>
<dbReference type="TAIR" id="AT1G18170"/>
<dbReference type="eggNOG" id="KOG0552">
    <property type="taxonomic scope" value="Eukaryota"/>
</dbReference>
<dbReference type="HOGENOM" id="CLU_090476_0_0_1"/>
<dbReference type="InParanoid" id="Q9LDY5"/>
<dbReference type="OMA" id="LCEGIEY"/>
<dbReference type="OrthoDB" id="1902587at2759"/>
<dbReference type="PhylomeDB" id="Q9LDY5"/>
<dbReference type="PRO" id="PR:Q9LDY5"/>
<dbReference type="Proteomes" id="UP000006548">
    <property type="component" value="Chromosome 1"/>
</dbReference>
<dbReference type="ExpressionAtlas" id="Q9LDY5">
    <property type="expression patterns" value="baseline and differential"/>
</dbReference>
<dbReference type="GO" id="GO:0009507">
    <property type="term" value="C:chloroplast"/>
    <property type="evidence" value="ECO:0007005"/>
    <property type="project" value="TAIR"/>
</dbReference>
<dbReference type="GO" id="GO:0009543">
    <property type="term" value="C:chloroplast thylakoid lumen"/>
    <property type="evidence" value="ECO:0007669"/>
    <property type="project" value="UniProtKB-SubCell"/>
</dbReference>
<dbReference type="GO" id="GO:0009535">
    <property type="term" value="C:chloroplast thylakoid membrane"/>
    <property type="evidence" value="ECO:0007005"/>
    <property type="project" value="TAIR"/>
</dbReference>
<dbReference type="GO" id="GO:0005634">
    <property type="term" value="C:nucleus"/>
    <property type="evidence" value="ECO:0007005"/>
    <property type="project" value="TAIR"/>
</dbReference>
<dbReference type="GO" id="GO:0003755">
    <property type="term" value="F:peptidyl-prolyl cis-trans isomerase activity"/>
    <property type="evidence" value="ECO:0007669"/>
    <property type="project" value="UniProtKB-KW"/>
</dbReference>
<dbReference type="FunFam" id="3.10.50.40:FF:000037">
    <property type="entry name" value="Peptidylprolyl isomerase"/>
    <property type="match status" value="1"/>
</dbReference>
<dbReference type="Gene3D" id="3.10.50.40">
    <property type="match status" value="1"/>
</dbReference>
<dbReference type="InterPro" id="IPR053111">
    <property type="entry name" value="Chloro_FKBP-type_PPIase"/>
</dbReference>
<dbReference type="InterPro" id="IPR046357">
    <property type="entry name" value="PPIase_dom_sf"/>
</dbReference>
<dbReference type="InterPro" id="IPR001179">
    <property type="entry name" value="PPIase_FKBP_dom"/>
</dbReference>
<dbReference type="PANTHER" id="PTHR47598">
    <property type="entry name" value="PEPTIDYL-PROLYL CIS-TRANS ISOMERASE FKBP17-2, CHLOROPLASTIC"/>
    <property type="match status" value="1"/>
</dbReference>
<dbReference type="PANTHER" id="PTHR47598:SF1">
    <property type="entry name" value="PEPTIDYL-PROLYL CIS-TRANS ISOMERASE FKBP17-2, CHLOROPLASTIC"/>
    <property type="match status" value="1"/>
</dbReference>
<dbReference type="Pfam" id="PF00254">
    <property type="entry name" value="FKBP_C"/>
    <property type="match status" value="1"/>
</dbReference>
<dbReference type="SUPFAM" id="SSF54534">
    <property type="entry name" value="FKBP-like"/>
    <property type="match status" value="1"/>
</dbReference>
<dbReference type="PROSITE" id="PS50059">
    <property type="entry name" value="FKBP_PPIASE"/>
    <property type="match status" value="1"/>
</dbReference>
<gene>
    <name type="primary">FKBP17-2</name>
    <name type="ordered locus">At1g18170</name>
    <name type="ORF">T10F20.17</name>
</gene>
<organism>
    <name type="scientific">Arabidopsis thaliana</name>
    <name type="common">Mouse-ear cress</name>
    <dbReference type="NCBI Taxonomy" id="3702"/>
    <lineage>
        <taxon>Eukaryota</taxon>
        <taxon>Viridiplantae</taxon>
        <taxon>Streptophyta</taxon>
        <taxon>Embryophyta</taxon>
        <taxon>Tracheophyta</taxon>
        <taxon>Spermatophyta</taxon>
        <taxon>Magnoliopsida</taxon>
        <taxon>eudicotyledons</taxon>
        <taxon>Gunneridae</taxon>
        <taxon>Pentapetalae</taxon>
        <taxon>rosids</taxon>
        <taxon>malvids</taxon>
        <taxon>Brassicales</taxon>
        <taxon>Brassicaceae</taxon>
        <taxon>Camelineae</taxon>
        <taxon>Arabidopsis</taxon>
    </lineage>
</organism>
<protein>
    <recommendedName>
        <fullName>Peptidyl-prolyl cis-trans isomerase FKBP17-2, chloroplastic</fullName>
        <shortName>PPIase FKBP17-2</shortName>
        <ecNumber>5.2.1.8</ecNumber>
    </recommendedName>
    <alternativeName>
        <fullName>FK506-binding protein 17-2</fullName>
        <shortName>AtFKBP17-2</shortName>
    </alternativeName>
    <alternativeName>
        <fullName>Immunophilin FKBP17-2</fullName>
    </alternativeName>
    <alternativeName>
        <fullName>Rotamase</fullName>
    </alternativeName>
</protein>
<reference key="1">
    <citation type="journal article" date="2000" name="Nature">
        <title>Sequence and analysis of chromosome 1 of the plant Arabidopsis thaliana.</title>
        <authorList>
            <person name="Theologis A."/>
            <person name="Ecker J.R."/>
            <person name="Palm C.J."/>
            <person name="Federspiel N.A."/>
            <person name="Kaul S."/>
            <person name="White O."/>
            <person name="Alonso J."/>
            <person name="Altafi H."/>
            <person name="Araujo R."/>
            <person name="Bowman C.L."/>
            <person name="Brooks S.Y."/>
            <person name="Buehler E."/>
            <person name="Chan A."/>
            <person name="Chao Q."/>
            <person name="Chen H."/>
            <person name="Cheuk R.F."/>
            <person name="Chin C.W."/>
            <person name="Chung M.K."/>
            <person name="Conn L."/>
            <person name="Conway A.B."/>
            <person name="Conway A.R."/>
            <person name="Creasy T.H."/>
            <person name="Dewar K."/>
            <person name="Dunn P."/>
            <person name="Etgu P."/>
            <person name="Feldblyum T.V."/>
            <person name="Feng J.-D."/>
            <person name="Fong B."/>
            <person name="Fujii C.Y."/>
            <person name="Gill J.E."/>
            <person name="Goldsmith A.D."/>
            <person name="Haas B."/>
            <person name="Hansen N.F."/>
            <person name="Hughes B."/>
            <person name="Huizar L."/>
            <person name="Hunter J.L."/>
            <person name="Jenkins J."/>
            <person name="Johnson-Hopson C."/>
            <person name="Khan S."/>
            <person name="Khaykin E."/>
            <person name="Kim C.J."/>
            <person name="Koo H.L."/>
            <person name="Kremenetskaia I."/>
            <person name="Kurtz D.B."/>
            <person name="Kwan A."/>
            <person name="Lam B."/>
            <person name="Langin-Hooper S."/>
            <person name="Lee A."/>
            <person name="Lee J.M."/>
            <person name="Lenz C.A."/>
            <person name="Li J.H."/>
            <person name="Li Y.-P."/>
            <person name="Lin X."/>
            <person name="Liu S.X."/>
            <person name="Liu Z.A."/>
            <person name="Luros J.S."/>
            <person name="Maiti R."/>
            <person name="Marziali A."/>
            <person name="Militscher J."/>
            <person name="Miranda M."/>
            <person name="Nguyen M."/>
            <person name="Nierman W.C."/>
            <person name="Osborne B.I."/>
            <person name="Pai G."/>
            <person name="Peterson J."/>
            <person name="Pham P.K."/>
            <person name="Rizzo M."/>
            <person name="Rooney T."/>
            <person name="Rowley D."/>
            <person name="Sakano H."/>
            <person name="Salzberg S.L."/>
            <person name="Schwartz J.R."/>
            <person name="Shinn P."/>
            <person name="Southwick A.M."/>
            <person name="Sun H."/>
            <person name="Tallon L.J."/>
            <person name="Tambunga G."/>
            <person name="Toriumi M.J."/>
            <person name="Town C.D."/>
            <person name="Utterback T."/>
            <person name="Van Aken S."/>
            <person name="Vaysberg M."/>
            <person name="Vysotskaia V.S."/>
            <person name="Walker M."/>
            <person name="Wu D."/>
            <person name="Yu G."/>
            <person name="Fraser C.M."/>
            <person name="Venter J.C."/>
            <person name="Davis R.W."/>
        </authorList>
    </citation>
    <scope>NUCLEOTIDE SEQUENCE [LARGE SCALE GENOMIC DNA]</scope>
    <source>
        <strain>cv. Columbia</strain>
    </source>
</reference>
<reference key="2">
    <citation type="journal article" date="2017" name="Plant J.">
        <title>Araport11: a complete reannotation of the Arabidopsis thaliana reference genome.</title>
        <authorList>
            <person name="Cheng C.Y."/>
            <person name="Krishnakumar V."/>
            <person name="Chan A.P."/>
            <person name="Thibaud-Nissen F."/>
            <person name="Schobel S."/>
            <person name="Town C.D."/>
        </authorList>
    </citation>
    <scope>GENOME REANNOTATION</scope>
    <source>
        <strain>cv. Columbia</strain>
    </source>
</reference>
<reference key="3">
    <citation type="journal article" date="2003" name="Science">
        <title>Empirical analysis of transcriptional activity in the Arabidopsis genome.</title>
        <authorList>
            <person name="Yamada K."/>
            <person name="Lim J."/>
            <person name="Dale J.M."/>
            <person name="Chen H."/>
            <person name="Shinn P."/>
            <person name="Palm C.J."/>
            <person name="Southwick A.M."/>
            <person name="Wu H.C."/>
            <person name="Kim C.J."/>
            <person name="Nguyen M."/>
            <person name="Pham P.K."/>
            <person name="Cheuk R.F."/>
            <person name="Karlin-Newmann G."/>
            <person name="Liu S.X."/>
            <person name="Lam B."/>
            <person name="Sakano H."/>
            <person name="Wu T."/>
            <person name="Yu G."/>
            <person name="Miranda M."/>
            <person name="Quach H.L."/>
            <person name="Tripp M."/>
            <person name="Chang C.H."/>
            <person name="Lee J.M."/>
            <person name="Toriumi M.J."/>
            <person name="Chan M.M."/>
            <person name="Tang C.C."/>
            <person name="Onodera C.S."/>
            <person name="Deng J.M."/>
            <person name="Akiyama K."/>
            <person name="Ansari Y."/>
            <person name="Arakawa T."/>
            <person name="Banh J."/>
            <person name="Banno F."/>
            <person name="Bowser L."/>
            <person name="Brooks S.Y."/>
            <person name="Carninci P."/>
            <person name="Chao Q."/>
            <person name="Choy N."/>
            <person name="Enju A."/>
            <person name="Goldsmith A.D."/>
            <person name="Gurjal M."/>
            <person name="Hansen N.F."/>
            <person name="Hayashizaki Y."/>
            <person name="Johnson-Hopson C."/>
            <person name="Hsuan V.W."/>
            <person name="Iida K."/>
            <person name="Karnes M."/>
            <person name="Khan S."/>
            <person name="Koesema E."/>
            <person name="Ishida J."/>
            <person name="Jiang P.X."/>
            <person name="Jones T."/>
            <person name="Kawai J."/>
            <person name="Kamiya A."/>
            <person name="Meyers C."/>
            <person name="Nakajima M."/>
            <person name="Narusaka M."/>
            <person name="Seki M."/>
            <person name="Sakurai T."/>
            <person name="Satou M."/>
            <person name="Tamse R."/>
            <person name="Vaysberg M."/>
            <person name="Wallender E.K."/>
            <person name="Wong C."/>
            <person name="Yamamura Y."/>
            <person name="Yuan S."/>
            <person name="Shinozaki K."/>
            <person name="Davis R.W."/>
            <person name="Theologis A."/>
            <person name="Ecker J.R."/>
        </authorList>
    </citation>
    <scope>NUCLEOTIDE SEQUENCE [LARGE SCALE MRNA]</scope>
    <source>
        <strain>cv. Columbia</strain>
    </source>
</reference>
<reference key="4">
    <citation type="submission" date="2002-03" db="EMBL/GenBank/DDBJ databases">
        <title>Full-length cDNA from Arabidopsis thaliana.</title>
        <authorList>
            <person name="Brover V.V."/>
            <person name="Troukhan M.E."/>
            <person name="Alexandrov N.A."/>
            <person name="Lu Y.-P."/>
            <person name="Flavell R.B."/>
            <person name="Feldmann K.A."/>
        </authorList>
    </citation>
    <scope>NUCLEOTIDE SEQUENCE [LARGE SCALE MRNA]</scope>
</reference>
<reference key="5">
    <citation type="journal article" date="2004" name="Plant Physiol.">
        <title>Immunophilins and parvulins. Superfamily of peptidyl prolyl isomerases in Arabidopsis.</title>
        <authorList>
            <person name="He Z."/>
            <person name="Li L."/>
            <person name="Luan S."/>
        </authorList>
    </citation>
    <scope>GENE FAMILY</scope>
    <scope>NOMENCLATURE</scope>
    <source>
        <strain>cv. Columbia</strain>
    </source>
</reference>
<reference key="6">
    <citation type="journal article" date="2008" name="PLoS ONE">
        <title>Sorting signals, N-terminal modifications and abundance of the chloroplast proteome.</title>
        <authorList>
            <person name="Zybailov B."/>
            <person name="Rutschow H."/>
            <person name="Friso G."/>
            <person name="Rudella A."/>
            <person name="Emanuelsson O."/>
            <person name="Sun Q."/>
            <person name="van Wijk K.J."/>
        </authorList>
    </citation>
    <scope>IDENTIFICATION BY MASS SPECTROMETRY</scope>
    <scope>SUBCELLULAR LOCATION [LARGE SCALE ANALYSIS]</scope>
</reference>
<proteinExistence type="evidence at protein level"/>
<feature type="transit peptide" description="Chloroplast" evidence="2">
    <location>
        <begin position="1"/>
        <end position="79"/>
    </location>
</feature>
<feature type="transit peptide" description="Thylakoid">
    <location>
        <begin position="80"/>
        <end status="unknown"/>
    </location>
</feature>
<feature type="chain" id="PRO_0000342090" description="Peptidyl-prolyl cis-trans isomerase FKBP17-2, chloroplastic">
    <location>
        <begin status="unknown"/>
        <end position="247"/>
    </location>
</feature>
<feature type="domain" description="PPIase FKBP-type" evidence="3">
    <location>
        <begin position="141"/>
        <end position="243"/>
    </location>
</feature>
<feature type="region of interest" description="Disordered" evidence="4">
    <location>
        <begin position="26"/>
        <end position="64"/>
    </location>
</feature>
<feature type="compositionally biased region" description="Pro residues" evidence="4">
    <location>
        <begin position="34"/>
        <end position="51"/>
    </location>
</feature>
<sequence>MANLFTATAPFLSLSKPFTKTASYHQCYASSSNPPEPESSSPPPPPPPPQPLASQQKRKKNVETTDWVASSLTRRFGIGAGLAWAGFLAFGVISEQIKTRIEVSQEVANTRDVEEEKEIVLPNGIRYYDQRVGGGATPRAGDLVVIDLKGQVQGTGQVFVDTFGTKDKKKMKPLALVVGSKPYSKGLCEGIDYVLRSMKAGGKRRVIVPPSLGFGVDGAELESGLQIPPNASLEYIVEIDRVSIAPA</sequence>
<keyword id="KW-0150">Chloroplast</keyword>
<keyword id="KW-0413">Isomerase</keyword>
<keyword id="KW-0934">Plastid</keyword>
<keyword id="KW-1185">Reference proteome</keyword>
<keyword id="KW-0697">Rotamase</keyword>
<keyword id="KW-0793">Thylakoid</keyword>
<keyword id="KW-0809">Transit peptide</keyword>
<name>FK172_ARATH</name>
<evidence type="ECO:0000250" key="1"/>
<evidence type="ECO:0000255" key="2"/>
<evidence type="ECO:0000255" key="3">
    <source>
        <dbReference type="PROSITE-ProRule" id="PRU00277"/>
    </source>
</evidence>
<evidence type="ECO:0000256" key="4">
    <source>
        <dbReference type="SAM" id="MobiDB-lite"/>
    </source>
</evidence>
<evidence type="ECO:0000269" key="5">
    <source>
    </source>
</evidence>
<evidence type="ECO:0000305" key="6"/>
<accession>Q9LDY5</accession>